<reference key="1">
    <citation type="journal article" date="1996" name="J. Mol. Evol.">
        <title>The mitochondrial genome of a monotreme--the platypus (Ornithorhynchus anatinus).</title>
        <authorList>
            <person name="Janke A."/>
            <person name="Gemmell N.J."/>
            <person name="Feldmaier-Fuchs G."/>
            <person name="von Haeseler A."/>
            <person name="Paabo S."/>
        </authorList>
    </citation>
    <scope>NUCLEOTIDE SEQUENCE [LARGE SCALE GENOMIC DNA]</scope>
    <source>
        <strain evidence="4">Glennie</strain>
    </source>
</reference>
<comment type="function">
    <text evidence="1">Core subunit of the mitochondrial membrane respiratory chain NADH dehydrogenase (Complex I) that is believed to belong to the minimal assembly required for catalysis. Complex I functions in the transfer of electrons from NADH to the respiratory chain. The immediate electron acceptor for the enzyme is believed to be ubiquinone (By similarity).</text>
</comment>
<comment type="catalytic activity">
    <reaction>
        <text>a ubiquinone + NADH + 5 H(+)(in) = a ubiquinol + NAD(+) + 4 H(+)(out)</text>
        <dbReference type="Rhea" id="RHEA:29091"/>
        <dbReference type="Rhea" id="RHEA-COMP:9565"/>
        <dbReference type="Rhea" id="RHEA-COMP:9566"/>
        <dbReference type="ChEBI" id="CHEBI:15378"/>
        <dbReference type="ChEBI" id="CHEBI:16389"/>
        <dbReference type="ChEBI" id="CHEBI:17976"/>
        <dbReference type="ChEBI" id="CHEBI:57540"/>
        <dbReference type="ChEBI" id="CHEBI:57945"/>
        <dbReference type="EC" id="7.1.1.2"/>
    </reaction>
</comment>
<comment type="subcellular location">
    <subcellularLocation>
        <location evidence="1">Mitochondrion inner membrane</location>
        <topology evidence="1">Multi-pass membrane protein</topology>
    </subcellularLocation>
</comment>
<comment type="similarity">
    <text evidence="3">Belongs to the complex I subunit 1 family.</text>
</comment>
<dbReference type="EC" id="7.1.1.2"/>
<dbReference type="EMBL" id="X83427">
    <property type="protein sequence ID" value="CAA58455.1"/>
    <property type="molecule type" value="Genomic_DNA"/>
</dbReference>
<dbReference type="PIR" id="A58888">
    <property type="entry name" value="A58888"/>
</dbReference>
<dbReference type="RefSeq" id="NP_008043.1">
    <property type="nucleotide sequence ID" value="NC_000891.1"/>
</dbReference>
<dbReference type="SMR" id="Q37717"/>
<dbReference type="FunCoup" id="Q37717">
    <property type="interactions" value="519"/>
</dbReference>
<dbReference type="STRING" id="9258.ENSOANP00000024997"/>
<dbReference type="Ensembl" id="ENSOANT00000028512.1">
    <property type="protein sequence ID" value="ENSOANP00000024997.1"/>
    <property type="gene ID" value="ENSOANG00000019388.1"/>
</dbReference>
<dbReference type="GeneID" id="808708"/>
<dbReference type="KEGG" id="oaa:808708"/>
<dbReference type="CTD" id="4535"/>
<dbReference type="eggNOG" id="KOG4770">
    <property type="taxonomic scope" value="Eukaryota"/>
</dbReference>
<dbReference type="GeneTree" id="ENSGT00390000006621"/>
<dbReference type="HOGENOM" id="CLU_015134_0_1_1"/>
<dbReference type="InParanoid" id="Q37717"/>
<dbReference type="OMA" id="WSGWASN"/>
<dbReference type="OrthoDB" id="531329at2759"/>
<dbReference type="TreeFam" id="TF352957"/>
<dbReference type="Proteomes" id="UP000002279">
    <property type="component" value="Mitochondrion"/>
</dbReference>
<dbReference type="Bgee" id="ENSOANG00000019388">
    <property type="expression patterns" value="Expressed in brain and 8 other cell types or tissues"/>
</dbReference>
<dbReference type="GO" id="GO:0005743">
    <property type="term" value="C:mitochondrial inner membrane"/>
    <property type="evidence" value="ECO:0007669"/>
    <property type="project" value="UniProtKB-SubCell"/>
</dbReference>
<dbReference type="GO" id="GO:0045271">
    <property type="term" value="C:respiratory chain complex I"/>
    <property type="evidence" value="ECO:0000318"/>
    <property type="project" value="GO_Central"/>
</dbReference>
<dbReference type="GO" id="GO:0008137">
    <property type="term" value="F:NADH dehydrogenase (ubiquinone) activity"/>
    <property type="evidence" value="ECO:0007669"/>
    <property type="project" value="UniProtKB-EC"/>
</dbReference>
<dbReference type="GO" id="GO:0009060">
    <property type="term" value="P:aerobic respiration"/>
    <property type="evidence" value="ECO:0000318"/>
    <property type="project" value="GO_Central"/>
</dbReference>
<dbReference type="GO" id="GO:0006120">
    <property type="term" value="P:mitochondrial electron transport, NADH to ubiquinone"/>
    <property type="evidence" value="ECO:0007669"/>
    <property type="project" value="Ensembl"/>
</dbReference>
<dbReference type="GO" id="GO:0032981">
    <property type="term" value="P:mitochondrial respiratory chain complex I assembly"/>
    <property type="evidence" value="ECO:0007669"/>
    <property type="project" value="Ensembl"/>
</dbReference>
<dbReference type="HAMAP" id="MF_01350">
    <property type="entry name" value="NDH1_NuoH"/>
    <property type="match status" value="1"/>
</dbReference>
<dbReference type="InterPro" id="IPR001694">
    <property type="entry name" value="NADH_UbQ_OxRdtase_su1/FPO"/>
</dbReference>
<dbReference type="InterPro" id="IPR018086">
    <property type="entry name" value="NADH_UbQ_OxRdtase_su1_CS"/>
</dbReference>
<dbReference type="PANTHER" id="PTHR11432">
    <property type="entry name" value="NADH DEHYDROGENASE SUBUNIT 1"/>
    <property type="match status" value="1"/>
</dbReference>
<dbReference type="PANTHER" id="PTHR11432:SF3">
    <property type="entry name" value="NADH-UBIQUINONE OXIDOREDUCTASE CHAIN 1"/>
    <property type="match status" value="1"/>
</dbReference>
<dbReference type="Pfam" id="PF00146">
    <property type="entry name" value="NADHdh"/>
    <property type="match status" value="1"/>
</dbReference>
<dbReference type="PROSITE" id="PS00667">
    <property type="entry name" value="COMPLEX1_ND1_1"/>
    <property type="match status" value="1"/>
</dbReference>
<dbReference type="PROSITE" id="PS00668">
    <property type="entry name" value="COMPLEX1_ND1_2"/>
    <property type="match status" value="1"/>
</dbReference>
<name>NU1M_ORNAN</name>
<organism>
    <name type="scientific">Ornithorhynchus anatinus</name>
    <name type="common">Duckbill platypus</name>
    <dbReference type="NCBI Taxonomy" id="9258"/>
    <lineage>
        <taxon>Eukaryota</taxon>
        <taxon>Metazoa</taxon>
        <taxon>Chordata</taxon>
        <taxon>Craniata</taxon>
        <taxon>Vertebrata</taxon>
        <taxon>Euteleostomi</taxon>
        <taxon>Mammalia</taxon>
        <taxon>Monotremata</taxon>
        <taxon>Ornithorhynchidae</taxon>
        <taxon>Ornithorhynchus</taxon>
    </lineage>
</organism>
<accession>Q37717</accession>
<sequence>MFLVNLLILIIPVLLAVAFLTLLERKILGYMQFRKGPNIVGAHGLLQPIADAVKLFTKEPLRPLTSSIYMFILAPILALSLALTIWIPLPMPLPLIDLNLGLLFVLSVSGLSVYSILWSGWASNSKYALTGALRAVAQTISYEVTLAIILLSIMLINGSFTLTTLNLTQEYMWLIVPTWPLMLMWFISTLAETNRAPFDLTEGESELVSGFNVEYAAGPFAMFFLAEYANIIIMNALTVILFFGTYHLIFLPEMSTTTFMIKTMLLTSLFLWIRASYPRFRYDQLMHLLWKNFLPITLVTCLWYIMLPTTLSGLPPQM</sequence>
<protein>
    <recommendedName>
        <fullName>NADH-ubiquinone oxidoreductase chain 1</fullName>
        <ecNumber>7.1.1.2</ecNumber>
    </recommendedName>
    <alternativeName>
        <fullName>NADH dehydrogenase subunit 1</fullName>
    </alternativeName>
</protein>
<evidence type="ECO:0000250" key="1"/>
<evidence type="ECO:0000255" key="2"/>
<evidence type="ECO:0000305" key="3"/>
<evidence type="ECO:0000312" key="4">
    <source>
        <dbReference type="Proteomes" id="UP000002279"/>
    </source>
</evidence>
<gene>
    <name type="primary">MT-ND1</name>
    <name type="synonym">MTND1</name>
    <name type="synonym">NADH1</name>
    <name type="synonym">ND1</name>
</gene>
<keyword id="KW-0249">Electron transport</keyword>
<keyword id="KW-0472">Membrane</keyword>
<keyword id="KW-0496">Mitochondrion</keyword>
<keyword id="KW-0999">Mitochondrion inner membrane</keyword>
<keyword id="KW-0520">NAD</keyword>
<keyword id="KW-1185">Reference proteome</keyword>
<keyword id="KW-0679">Respiratory chain</keyword>
<keyword id="KW-1278">Translocase</keyword>
<keyword id="KW-0812">Transmembrane</keyword>
<keyword id="KW-1133">Transmembrane helix</keyword>
<keyword id="KW-0813">Transport</keyword>
<keyword id="KW-0830">Ubiquinone</keyword>
<feature type="chain" id="PRO_0000117443" description="NADH-ubiquinone oxidoreductase chain 1">
    <location>
        <begin position="1"/>
        <end position="318"/>
    </location>
</feature>
<feature type="transmembrane region" description="Helical" evidence="2">
    <location>
        <begin position="2"/>
        <end position="22"/>
    </location>
</feature>
<feature type="transmembrane region" description="Helical" evidence="2">
    <location>
        <begin position="68"/>
        <end position="88"/>
    </location>
</feature>
<feature type="transmembrane region" description="Helical" evidence="2">
    <location>
        <begin position="100"/>
        <end position="120"/>
    </location>
</feature>
<feature type="transmembrane region" description="Helical" evidence="2">
    <location>
        <begin position="144"/>
        <end position="164"/>
    </location>
</feature>
<feature type="transmembrane region" description="Helical" evidence="2">
    <location>
        <begin position="171"/>
        <end position="191"/>
    </location>
</feature>
<feature type="transmembrane region" description="Helical" evidence="2">
    <location>
        <begin position="231"/>
        <end position="251"/>
    </location>
</feature>
<feature type="transmembrane region" description="Helical" evidence="2">
    <location>
        <begin position="253"/>
        <end position="273"/>
    </location>
</feature>
<feature type="transmembrane region" description="Helical" evidence="2">
    <location>
        <begin position="293"/>
        <end position="313"/>
    </location>
</feature>
<geneLocation type="mitochondrion"/>
<proteinExistence type="inferred from homology"/>